<sequence length="410" mass="44897">MDREDILKEFCNRNNIDVSQGRFFLESTNWNYELATALLHEVIPPEEDHGLQPSSDVSKVPEVTGSSSGISGGDQQPPRPLQRQQNTQGQGMKSGTASKKFATLRDLEGNDESAEEKSHLFTGGEKSGLSVEDGDPDPKKQLVRDILEKARQHTISPLDEQDSGPSSLASSWASVGQRLGTENEASGSTTPVTQSGPPRENPPTESQPEKPLRRTLYFWRNGFSVDDGPIYTYDDPANQEMLRYINSGRAPLHLLGVSMNQPIDVVVQHRMDEDYVAPFKPFSGKGQRLGSTYMQPRMSQMPGGLYTDTSTSSSVPINVKPNSTTPHASLQIDENKPTTRIQVRLSNGGRTVLTVNLSHTLHDIYEAVRAVSPGNFILSVPFPAKTLEDDPSVTVEAASLKNASLVQKSL</sequence>
<organism>
    <name type="scientific">Schizosaccharomyces pombe (strain 972 / ATCC 24843)</name>
    <name type="common">Fission yeast</name>
    <dbReference type="NCBI Taxonomy" id="284812"/>
    <lineage>
        <taxon>Eukaryota</taxon>
        <taxon>Fungi</taxon>
        <taxon>Dikarya</taxon>
        <taxon>Ascomycota</taxon>
        <taxon>Taphrinomycotina</taxon>
        <taxon>Schizosaccharomycetes</taxon>
        <taxon>Schizosaccharomycetales</taxon>
        <taxon>Schizosaccharomycetaceae</taxon>
        <taxon>Schizosaccharomyces</taxon>
    </lineage>
</organism>
<reference key="1">
    <citation type="journal article" date="2002" name="Nature">
        <title>The genome sequence of Schizosaccharomyces pombe.</title>
        <authorList>
            <person name="Wood V."/>
            <person name="Gwilliam R."/>
            <person name="Rajandream M.A."/>
            <person name="Lyne M.H."/>
            <person name="Lyne R."/>
            <person name="Stewart A."/>
            <person name="Sgouros J.G."/>
            <person name="Peat N."/>
            <person name="Hayles J."/>
            <person name="Baker S.G."/>
            <person name="Basham D."/>
            <person name="Bowman S."/>
            <person name="Brooks K."/>
            <person name="Brown D."/>
            <person name="Brown S."/>
            <person name="Chillingworth T."/>
            <person name="Churcher C.M."/>
            <person name="Collins M."/>
            <person name="Connor R."/>
            <person name="Cronin A."/>
            <person name="Davis P."/>
            <person name="Feltwell T."/>
            <person name="Fraser A."/>
            <person name="Gentles S."/>
            <person name="Goble A."/>
            <person name="Hamlin N."/>
            <person name="Harris D.E."/>
            <person name="Hidalgo J."/>
            <person name="Hodgson G."/>
            <person name="Holroyd S."/>
            <person name="Hornsby T."/>
            <person name="Howarth S."/>
            <person name="Huckle E.J."/>
            <person name="Hunt S."/>
            <person name="Jagels K."/>
            <person name="James K.D."/>
            <person name="Jones L."/>
            <person name="Jones M."/>
            <person name="Leather S."/>
            <person name="McDonald S."/>
            <person name="McLean J."/>
            <person name="Mooney P."/>
            <person name="Moule S."/>
            <person name="Mungall K.L."/>
            <person name="Murphy L.D."/>
            <person name="Niblett D."/>
            <person name="Odell C."/>
            <person name="Oliver K."/>
            <person name="O'Neil S."/>
            <person name="Pearson D."/>
            <person name="Quail M.A."/>
            <person name="Rabbinowitsch E."/>
            <person name="Rutherford K.M."/>
            <person name="Rutter S."/>
            <person name="Saunders D."/>
            <person name="Seeger K."/>
            <person name="Sharp S."/>
            <person name="Skelton J."/>
            <person name="Simmonds M.N."/>
            <person name="Squares R."/>
            <person name="Squares S."/>
            <person name="Stevens K."/>
            <person name="Taylor K."/>
            <person name="Taylor R.G."/>
            <person name="Tivey A."/>
            <person name="Walsh S.V."/>
            <person name="Warren T."/>
            <person name="Whitehead S."/>
            <person name="Woodward J.R."/>
            <person name="Volckaert G."/>
            <person name="Aert R."/>
            <person name="Robben J."/>
            <person name="Grymonprez B."/>
            <person name="Weltjens I."/>
            <person name="Vanstreels E."/>
            <person name="Rieger M."/>
            <person name="Schaefer M."/>
            <person name="Mueller-Auer S."/>
            <person name="Gabel C."/>
            <person name="Fuchs M."/>
            <person name="Duesterhoeft A."/>
            <person name="Fritzc C."/>
            <person name="Holzer E."/>
            <person name="Moestl D."/>
            <person name="Hilbert H."/>
            <person name="Borzym K."/>
            <person name="Langer I."/>
            <person name="Beck A."/>
            <person name="Lehrach H."/>
            <person name="Reinhardt R."/>
            <person name="Pohl T.M."/>
            <person name="Eger P."/>
            <person name="Zimmermann W."/>
            <person name="Wedler H."/>
            <person name="Wambutt R."/>
            <person name="Purnelle B."/>
            <person name="Goffeau A."/>
            <person name="Cadieu E."/>
            <person name="Dreano S."/>
            <person name="Gloux S."/>
            <person name="Lelaure V."/>
            <person name="Mottier S."/>
            <person name="Galibert F."/>
            <person name="Aves S.J."/>
            <person name="Xiang Z."/>
            <person name="Hunt C."/>
            <person name="Moore K."/>
            <person name="Hurst S.M."/>
            <person name="Lucas M."/>
            <person name="Rochet M."/>
            <person name="Gaillardin C."/>
            <person name="Tallada V.A."/>
            <person name="Garzon A."/>
            <person name="Thode G."/>
            <person name="Daga R.R."/>
            <person name="Cruzado L."/>
            <person name="Jimenez J."/>
            <person name="Sanchez M."/>
            <person name="del Rey F."/>
            <person name="Benito J."/>
            <person name="Dominguez A."/>
            <person name="Revuelta J.L."/>
            <person name="Moreno S."/>
            <person name="Armstrong J."/>
            <person name="Forsburg S.L."/>
            <person name="Cerutti L."/>
            <person name="Lowe T."/>
            <person name="McCombie W.R."/>
            <person name="Paulsen I."/>
            <person name="Potashkin J."/>
            <person name="Shpakovski G.V."/>
            <person name="Ussery D."/>
            <person name="Barrell B.G."/>
            <person name="Nurse P."/>
        </authorList>
    </citation>
    <scope>NUCLEOTIDE SEQUENCE [LARGE SCALE GENOMIC DNA]</scope>
    <source>
        <strain>972 / ATCC 24843</strain>
    </source>
</reference>
<reference key="2">
    <citation type="journal article" date="2004" name="Curr. Biol.">
        <title>The Ubx2 and Ubx3 cofactors direct Cdc48 activity to proteolytic and nonproteolytic ubiquitin-dependent processes.</title>
        <authorList>
            <person name="Hartmann-Petersen R."/>
            <person name="Wallace M."/>
            <person name="Hofmann K."/>
            <person name="Koch G."/>
            <person name="Johnsen A.H."/>
            <person name="Hendil K.B."/>
            <person name="Gordon C."/>
        </authorList>
    </citation>
    <scope>FUNCTION</scope>
    <scope>INTERACTION WITH CDC48</scope>
</reference>
<reference key="3">
    <citation type="journal article" date="2005" name="Curr. Biol.">
        <title>A large-scale screen in S. pombe identifies seven novel genes required for critical meiotic events.</title>
        <authorList>
            <person name="Martin-Castellanos C."/>
            <person name="Blanco M."/>
            <person name="Rozalen A.E."/>
            <person name="Perez-Hidalgo L."/>
            <person name="Garcia A.I."/>
            <person name="Conde F."/>
            <person name="Mata J."/>
            <person name="Ellermeier C."/>
            <person name="Davis L."/>
            <person name="San-Segundo P."/>
            <person name="Smith G.R."/>
            <person name="Moreno S."/>
        </authorList>
    </citation>
    <scope>FUNCTION IN SPORULATION</scope>
</reference>
<reference key="4">
    <citation type="journal article" date="2008" name="J. Proteome Res.">
        <title>Phosphoproteome analysis of fission yeast.</title>
        <authorList>
            <person name="Wilson-Grady J.T."/>
            <person name="Villen J."/>
            <person name="Gygi S.P."/>
        </authorList>
    </citation>
    <scope>PHOSPHORYLATION [LARGE SCALE ANALYSIS] AT SER-156; SER-167; SER-186 AND THR-190</scope>
    <scope>IDENTIFICATION BY MASS SPECTROMETRY</scope>
</reference>
<comment type="function">
    <text evidence="4 5">Involved in CDC48-dependent protein degradation through the ubiquitin/proteasome pathway. Involved in delivery of substrates to the 26S proteasome. Also required for membrane fusion and sporulation.</text>
</comment>
<comment type="subunit">
    <text evidence="4">Interacts with cdc48.</text>
</comment>
<dbReference type="EMBL" id="CU329670">
    <property type="protein sequence ID" value="CAB52272.1"/>
    <property type="molecule type" value="Genomic_DNA"/>
</dbReference>
<dbReference type="PIR" id="T38658">
    <property type="entry name" value="T38658"/>
</dbReference>
<dbReference type="RefSeq" id="NP_593429.1">
    <property type="nucleotide sequence ID" value="NM_001018862.2"/>
</dbReference>
<dbReference type="SMR" id="Q9UT81"/>
<dbReference type="BioGRID" id="279601">
    <property type="interactions" value="6"/>
</dbReference>
<dbReference type="FunCoup" id="Q9UT81">
    <property type="interactions" value="706"/>
</dbReference>
<dbReference type="IntAct" id="Q9UT81">
    <property type="interactions" value="5"/>
</dbReference>
<dbReference type="STRING" id="284812.Q9UT81"/>
<dbReference type="iPTMnet" id="Q9UT81"/>
<dbReference type="PaxDb" id="4896-SPAC343.09.1"/>
<dbReference type="EnsemblFungi" id="SPAC343.09.1">
    <property type="protein sequence ID" value="SPAC343.09.1:pep"/>
    <property type="gene ID" value="SPAC343.09"/>
</dbReference>
<dbReference type="GeneID" id="2543170"/>
<dbReference type="KEGG" id="spo:2543170"/>
<dbReference type="PomBase" id="SPAC343.09">
    <property type="gene designation" value="ubx3"/>
</dbReference>
<dbReference type="VEuPathDB" id="FungiDB:SPAC343.09"/>
<dbReference type="eggNOG" id="KOG2086">
    <property type="taxonomic scope" value="Eukaryota"/>
</dbReference>
<dbReference type="HOGENOM" id="CLU_029402_4_1_1"/>
<dbReference type="InParanoid" id="Q9UT81"/>
<dbReference type="OMA" id="NKDHTDK"/>
<dbReference type="PhylomeDB" id="Q9UT81"/>
<dbReference type="PRO" id="PR:Q9UT81"/>
<dbReference type="Proteomes" id="UP000002485">
    <property type="component" value="Chromosome I"/>
</dbReference>
<dbReference type="GO" id="GO:0005829">
    <property type="term" value="C:cytosol"/>
    <property type="evidence" value="ECO:0000318"/>
    <property type="project" value="GO_Central"/>
</dbReference>
<dbReference type="GO" id="GO:0005634">
    <property type="term" value="C:nucleus"/>
    <property type="evidence" value="ECO:0000318"/>
    <property type="project" value="GO_Central"/>
</dbReference>
<dbReference type="GO" id="GO:0043130">
    <property type="term" value="F:ubiquitin binding"/>
    <property type="evidence" value="ECO:0000314"/>
    <property type="project" value="PomBase"/>
</dbReference>
<dbReference type="GO" id="GO:0000045">
    <property type="term" value="P:autophagosome assembly"/>
    <property type="evidence" value="ECO:0000318"/>
    <property type="project" value="GO_Central"/>
</dbReference>
<dbReference type="GO" id="GO:0007030">
    <property type="term" value="P:Golgi organization"/>
    <property type="evidence" value="ECO:0000318"/>
    <property type="project" value="GO_Central"/>
</dbReference>
<dbReference type="GO" id="GO:0051321">
    <property type="term" value="P:meiotic cell cycle"/>
    <property type="evidence" value="ECO:0007669"/>
    <property type="project" value="UniProtKB-KW"/>
</dbReference>
<dbReference type="GO" id="GO:0061025">
    <property type="term" value="P:membrane fusion"/>
    <property type="evidence" value="ECO:0000318"/>
    <property type="project" value="GO_Central"/>
</dbReference>
<dbReference type="GO" id="GO:0031468">
    <property type="term" value="P:nuclear membrane reassembly"/>
    <property type="evidence" value="ECO:0000318"/>
    <property type="project" value="GO_Central"/>
</dbReference>
<dbReference type="GO" id="GO:0043161">
    <property type="term" value="P:proteasome-mediated ubiquitin-dependent protein catabolic process"/>
    <property type="evidence" value="ECO:0000316"/>
    <property type="project" value="PomBase"/>
</dbReference>
<dbReference type="GO" id="GO:0030435">
    <property type="term" value="P:sporulation resulting in formation of a cellular spore"/>
    <property type="evidence" value="ECO:0007669"/>
    <property type="project" value="UniProtKB-KW"/>
</dbReference>
<dbReference type="CDD" id="cd14348">
    <property type="entry name" value="UBA_p47"/>
    <property type="match status" value="1"/>
</dbReference>
<dbReference type="CDD" id="cd01770">
    <property type="entry name" value="UBX_UBXN2"/>
    <property type="match status" value="1"/>
</dbReference>
<dbReference type="FunFam" id="3.10.20.90:FF:000270">
    <property type="entry name" value="Ubiquitin regulatory protein, putative"/>
    <property type="match status" value="1"/>
</dbReference>
<dbReference type="FunFam" id="3.30.420.210:FF:000002">
    <property type="entry name" value="UBX domain-containing protein 1"/>
    <property type="match status" value="1"/>
</dbReference>
<dbReference type="Gene3D" id="1.10.8.10">
    <property type="entry name" value="DNA helicase RuvA subunit, C-terminal domain"/>
    <property type="match status" value="1"/>
</dbReference>
<dbReference type="Gene3D" id="3.10.20.90">
    <property type="entry name" value="Phosphatidylinositol 3-kinase Catalytic Subunit, Chain A, domain 1"/>
    <property type="match status" value="1"/>
</dbReference>
<dbReference type="Gene3D" id="3.30.420.210">
    <property type="entry name" value="SEP domain"/>
    <property type="match status" value="1"/>
</dbReference>
<dbReference type="InterPro" id="IPR036241">
    <property type="entry name" value="NSFL1C_SEP_dom_sf"/>
</dbReference>
<dbReference type="InterPro" id="IPR012989">
    <property type="entry name" value="SEP_domain"/>
</dbReference>
<dbReference type="InterPro" id="IPR009060">
    <property type="entry name" value="UBA-like_sf"/>
</dbReference>
<dbReference type="InterPro" id="IPR029071">
    <property type="entry name" value="Ubiquitin-like_domsf"/>
</dbReference>
<dbReference type="InterPro" id="IPR001012">
    <property type="entry name" value="UBX_dom"/>
</dbReference>
<dbReference type="PANTHER" id="PTHR23333:SF20">
    <property type="entry name" value="NSFL1 COFACTOR P47"/>
    <property type="match status" value="1"/>
</dbReference>
<dbReference type="PANTHER" id="PTHR23333">
    <property type="entry name" value="UBX DOMAIN CONTAINING PROTEIN"/>
    <property type="match status" value="1"/>
</dbReference>
<dbReference type="Pfam" id="PF08059">
    <property type="entry name" value="SEP"/>
    <property type="match status" value="1"/>
</dbReference>
<dbReference type="Pfam" id="PF00789">
    <property type="entry name" value="UBX"/>
    <property type="match status" value="1"/>
</dbReference>
<dbReference type="SMART" id="SM00553">
    <property type="entry name" value="SEP"/>
    <property type="match status" value="1"/>
</dbReference>
<dbReference type="SMART" id="SM00166">
    <property type="entry name" value="UBX"/>
    <property type="match status" value="1"/>
</dbReference>
<dbReference type="SUPFAM" id="SSF102848">
    <property type="entry name" value="NSFL1 (p97 ATPase) cofactor p47, SEP domain"/>
    <property type="match status" value="1"/>
</dbReference>
<dbReference type="SUPFAM" id="SSF46934">
    <property type="entry name" value="UBA-like"/>
    <property type="match status" value="1"/>
</dbReference>
<dbReference type="SUPFAM" id="SSF54236">
    <property type="entry name" value="Ubiquitin-like"/>
    <property type="match status" value="1"/>
</dbReference>
<dbReference type="PROSITE" id="PS51399">
    <property type="entry name" value="SEP"/>
    <property type="match status" value="1"/>
</dbReference>
<dbReference type="PROSITE" id="PS50033">
    <property type="entry name" value="UBX"/>
    <property type="match status" value="1"/>
</dbReference>
<keyword id="KW-0469">Meiosis</keyword>
<keyword id="KW-0597">Phosphoprotein</keyword>
<keyword id="KW-1185">Reference proteome</keyword>
<keyword id="KW-0749">Sporulation</keyword>
<keyword id="KW-0833">Ubl conjugation pathway</keyword>
<proteinExistence type="evidence at protein level"/>
<evidence type="ECO:0000255" key="1">
    <source>
        <dbReference type="PROSITE-ProRule" id="PRU00215"/>
    </source>
</evidence>
<evidence type="ECO:0000255" key="2">
    <source>
        <dbReference type="PROSITE-ProRule" id="PRU00732"/>
    </source>
</evidence>
<evidence type="ECO:0000256" key="3">
    <source>
        <dbReference type="SAM" id="MobiDB-lite"/>
    </source>
</evidence>
<evidence type="ECO:0000269" key="4">
    <source>
    </source>
</evidence>
<evidence type="ECO:0000269" key="5">
    <source>
    </source>
</evidence>
<evidence type="ECO:0000269" key="6">
    <source>
    </source>
</evidence>
<accession>Q9UT81</accession>
<name>UBX3_SCHPO</name>
<protein>
    <recommendedName>
        <fullName>UBX domain-containing protein 3</fullName>
    </recommendedName>
    <alternativeName>
        <fullName>Meiotically up-regulated gene 39 protein</fullName>
    </alternativeName>
</protein>
<feature type="chain" id="PRO_0000211006" description="UBX domain-containing protein 3">
    <location>
        <begin position="1"/>
        <end position="410"/>
    </location>
</feature>
<feature type="domain" description="SEP" evidence="2">
    <location>
        <begin position="211"/>
        <end position="276"/>
    </location>
</feature>
<feature type="domain" description="UBX" evidence="1">
    <location>
        <begin position="334"/>
        <end position="410"/>
    </location>
</feature>
<feature type="region of interest" description="Disordered" evidence="3">
    <location>
        <begin position="46"/>
        <end position="139"/>
    </location>
</feature>
<feature type="region of interest" description="Disordered" evidence="3">
    <location>
        <begin position="154"/>
        <end position="212"/>
    </location>
</feature>
<feature type="compositionally biased region" description="Low complexity" evidence="3">
    <location>
        <begin position="65"/>
        <end position="85"/>
    </location>
</feature>
<feature type="compositionally biased region" description="Polar residues" evidence="3">
    <location>
        <begin position="86"/>
        <end position="97"/>
    </location>
</feature>
<feature type="compositionally biased region" description="Low complexity" evidence="3">
    <location>
        <begin position="163"/>
        <end position="174"/>
    </location>
</feature>
<feature type="compositionally biased region" description="Polar residues" evidence="3">
    <location>
        <begin position="183"/>
        <end position="196"/>
    </location>
</feature>
<feature type="modified residue" description="Phosphoserine" evidence="6">
    <location>
        <position position="156"/>
    </location>
</feature>
<feature type="modified residue" description="Phosphoserine" evidence="6">
    <location>
        <position position="167"/>
    </location>
</feature>
<feature type="modified residue" description="Phosphoserine" evidence="6">
    <location>
        <position position="186"/>
    </location>
</feature>
<feature type="modified residue" description="Phosphothreonine" evidence="6">
    <location>
        <position position="190"/>
    </location>
</feature>
<gene>
    <name type="primary">ubx3</name>
    <name type="synonym">mug39</name>
    <name type="ORF">SPAC343.09</name>
</gene>